<protein>
    <recommendedName>
        <fullName evidence="1">DNA/RNA-binding protein Alba</fullName>
    </recommendedName>
</protein>
<gene>
    <name evidence="1" type="primary">albA</name>
    <name type="ordered locus">PYRAB03940</name>
    <name type="ORF">PAB7094</name>
</gene>
<feature type="chain" id="PRO_0000151704" description="DNA/RNA-binding protein Alba">
    <location>
        <begin position="1"/>
        <end position="93"/>
    </location>
</feature>
<feature type="modified residue" description="N6-acetyllysine" evidence="1">
    <location>
        <position position="11"/>
    </location>
</feature>
<comment type="function">
    <text evidence="1">Binds double-stranded DNA tightly but without sequence specificity. Involved in DNA compaction.</text>
</comment>
<comment type="subcellular location">
    <subcellularLocation>
        <location evidence="1">Cytoplasm</location>
    </subcellularLocation>
    <subcellularLocation>
        <location evidence="1">Chromosome</location>
    </subcellularLocation>
</comment>
<comment type="PTM">
    <text evidence="1">Acetylated. Acetylation at Lys-11 decreases DNA-binding affinity.</text>
</comment>
<comment type="similarity">
    <text evidence="1">Belongs to the histone-like Alba family.</text>
</comment>
<name>ALBA_PYRAB</name>
<proteinExistence type="inferred from homology"/>
<evidence type="ECO:0000255" key="1">
    <source>
        <dbReference type="HAMAP-Rule" id="MF_01122"/>
    </source>
</evidence>
<accession>Q9V1N3</accession>
<accession>G8ZG93</accession>
<dbReference type="EMBL" id="AJ248284">
    <property type="protein sequence ID" value="CAB49316.1"/>
    <property type="molecule type" value="Genomic_DNA"/>
</dbReference>
<dbReference type="EMBL" id="HE613800">
    <property type="protein sequence ID" value="CCE69772.1"/>
    <property type="molecule type" value="Genomic_DNA"/>
</dbReference>
<dbReference type="PIR" id="E75154">
    <property type="entry name" value="E75154"/>
</dbReference>
<dbReference type="RefSeq" id="WP_010867516.1">
    <property type="nucleotide sequence ID" value="NC_000868.1"/>
</dbReference>
<dbReference type="SMR" id="Q9V1N3"/>
<dbReference type="STRING" id="272844.PAB7094"/>
<dbReference type="KEGG" id="pab:PAB7094"/>
<dbReference type="PATRIC" id="fig|272844.11.peg.415"/>
<dbReference type="eggNOG" id="arCOG01753">
    <property type="taxonomic scope" value="Archaea"/>
</dbReference>
<dbReference type="HOGENOM" id="CLU_110989_1_0_2"/>
<dbReference type="OrthoDB" id="10360at2157"/>
<dbReference type="PhylomeDB" id="Q9V1N3"/>
<dbReference type="Proteomes" id="UP000000810">
    <property type="component" value="Chromosome"/>
</dbReference>
<dbReference type="Proteomes" id="UP000009139">
    <property type="component" value="Chromosome"/>
</dbReference>
<dbReference type="GO" id="GO:0005694">
    <property type="term" value="C:chromosome"/>
    <property type="evidence" value="ECO:0007669"/>
    <property type="project" value="UniProtKB-SubCell"/>
</dbReference>
<dbReference type="GO" id="GO:0005737">
    <property type="term" value="C:cytoplasm"/>
    <property type="evidence" value="ECO:0007669"/>
    <property type="project" value="UniProtKB-SubCell"/>
</dbReference>
<dbReference type="GO" id="GO:0003690">
    <property type="term" value="F:double-stranded DNA binding"/>
    <property type="evidence" value="ECO:0007669"/>
    <property type="project" value="UniProtKB-UniRule"/>
</dbReference>
<dbReference type="GO" id="GO:0003723">
    <property type="term" value="F:RNA binding"/>
    <property type="evidence" value="ECO:0007669"/>
    <property type="project" value="InterPro"/>
</dbReference>
<dbReference type="GO" id="GO:0030261">
    <property type="term" value="P:chromosome condensation"/>
    <property type="evidence" value="ECO:0007669"/>
    <property type="project" value="UniProtKB-KW"/>
</dbReference>
<dbReference type="Gene3D" id="3.30.110.20">
    <property type="entry name" value="Alba-like domain"/>
    <property type="match status" value="1"/>
</dbReference>
<dbReference type="HAMAP" id="MF_01122">
    <property type="entry name" value="AlbA"/>
    <property type="match status" value="1"/>
</dbReference>
<dbReference type="InterPro" id="IPR036882">
    <property type="entry name" value="Alba-like_dom_sf"/>
</dbReference>
<dbReference type="InterPro" id="IPR013795">
    <property type="entry name" value="DNA/RNA-bd_Alba"/>
</dbReference>
<dbReference type="InterPro" id="IPR002775">
    <property type="entry name" value="DNA/RNA-bd_Alba-like"/>
</dbReference>
<dbReference type="NCBIfam" id="TIGR00285">
    <property type="entry name" value="DNA-binding protein Alba"/>
    <property type="match status" value="1"/>
</dbReference>
<dbReference type="NCBIfam" id="NF003088">
    <property type="entry name" value="PRK04015.1"/>
    <property type="match status" value="1"/>
</dbReference>
<dbReference type="Pfam" id="PF01918">
    <property type="entry name" value="Alba"/>
    <property type="match status" value="1"/>
</dbReference>
<dbReference type="PIRSF" id="PIRSF028732">
    <property type="entry name" value="Alba"/>
    <property type="match status" value="1"/>
</dbReference>
<dbReference type="SUPFAM" id="SSF82704">
    <property type="entry name" value="AlbA-like"/>
    <property type="match status" value="1"/>
</dbReference>
<sequence>MTEEHVVYIGKKPVMNYVLAVITQFHEGAKEVSIKARGRAISRAVDVAEIVRNRFLKDDVDVKEIKIGTEELPTADGRTTNTSTIEIVLARKA</sequence>
<keyword id="KW-0007">Acetylation</keyword>
<keyword id="KW-0158">Chromosome</keyword>
<keyword id="KW-0963">Cytoplasm</keyword>
<keyword id="KW-0226">DNA condensation</keyword>
<keyword id="KW-0238">DNA-binding</keyword>
<reference key="1">
    <citation type="journal article" date="2003" name="Mol. Microbiol.">
        <title>An integrated analysis of the genome of the hyperthermophilic archaeon Pyrococcus abyssi.</title>
        <authorList>
            <person name="Cohen G.N."/>
            <person name="Barbe V."/>
            <person name="Flament D."/>
            <person name="Galperin M."/>
            <person name="Heilig R."/>
            <person name="Lecompte O."/>
            <person name="Poch O."/>
            <person name="Prieur D."/>
            <person name="Querellou J."/>
            <person name="Ripp R."/>
            <person name="Thierry J.-C."/>
            <person name="Van der Oost J."/>
            <person name="Weissenbach J."/>
            <person name="Zivanovic Y."/>
            <person name="Forterre P."/>
        </authorList>
    </citation>
    <scope>NUCLEOTIDE SEQUENCE [LARGE SCALE GENOMIC DNA]</scope>
    <source>
        <strain>GE5 / Orsay</strain>
    </source>
</reference>
<reference key="2">
    <citation type="journal article" date="2012" name="Curr. Microbiol.">
        <title>Re-annotation of two hyperthermophilic archaea Pyrococcus abyssi GE5 and Pyrococcus furiosus DSM 3638.</title>
        <authorList>
            <person name="Gao J."/>
            <person name="Wang J."/>
        </authorList>
    </citation>
    <scope>GENOME REANNOTATION</scope>
    <source>
        <strain>GE5 / Orsay</strain>
    </source>
</reference>
<organism>
    <name type="scientific">Pyrococcus abyssi (strain GE5 / Orsay)</name>
    <dbReference type="NCBI Taxonomy" id="272844"/>
    <lineage>
        <taxon>Archaea</taxon>
        <taxon>Methanobacteriati</taxon>
        <taxon>Methanobacteriota</taxon>
        <taxon>Thermococci</taxon>
        <taxon>Thermococcales</taxon>
        <taxon>Thermococcaceae</taxon>
        <taxon>Pyrococcus</taxon>
    </lineage>
</organism>